<protein>
    <recommendedName>
        <fullName evidence="1">Probable septum site-determining protein MinC</fullName>
    </recommendedName>
</protein>
<reference key="1">
    <citation type="journal article" date="2006" name="Nat. Biotechnol.">
        <title>Genome sequence of the bioplastic-producing 'Knallgas' bacterium Ralstonia eutropha H16.</title>
        <authorList>
            <person name="Pohlmann A."/>
            <person name="Fricke W.F."/>
            <person name="Reinecke F."/>
            <person name="Kusian B."/>
            <person name="Liesegang H."/>
            <person name="Cramm R."/>
            <person name="Eitinger T."/>
            <person name="Ewering C."/>
            <person name="Poetter M."/>
            <person name="Schwartz E."/>
            <person name="Strittmatter A."/>
            <person name="Voss I."/>
            <person name="Gottschalk G."/>
            <person name="Steinbuechel A."/>
            <person name="Friedrich B."/>
            <person name="Bowien B."/>
        </authorList>
    </citation>
    <scope>NUCLEOTIDE SEQUENCE [LARGE SCALE GENOMIC DNA]</scope>
    <source>
        <strain>ATCC 17699 / DSM 428 / KCTC 22496 / NCIMB 10442 / H16 / Stanier 337</strain>
    </source>
</reference>
<organism>
    <name type="scientific">Cupriavidus necator (strain ATCC 17699 / DSM 428 / KCTC 22496 / NCIMB 10442 / H16 / Stanier 337)</name>
    <name type="common">Ralstonia eutropha</name>
    <dbReference type="NCBI Taxonomy" id="381666"/>
    <lineage>
        <taxon>Bacteria</taxon>
        <taxon>Pseudomonadati</taxon>
        <taxon>Pseudomonadota</taxon>
        <taxon>Betaproteobacteria</taxon>
        <taxon>Burkholderiales</taxon>
        <taxon>Burkholderiaceae</taxon>
        <taxon>Cupriavidus</taxon>
    </lineage>
</organism>
<evidence type="ECO:0000255" key="1">
    <source>
        <dbReference type="HAMAP-Rule" id="MF_00267"/>
    </source>
</evidence>
<accession>Q0KFI3</accession>
<name>MINC_CUPNH</name>
<feature type="chain" id="PRO_1000047849" description="Probable septum site-determining protein MinC">
    <location>
        <begin position="1"/>
        <end position="270"/>
    </location>
</feature>
<proteinExistence type="inferred from homology"/>
<dbReference type="EMBL" id="AM260479">
    <property type="protein sequence ID" value="CAJ91238.1"/>
    <property type="molecule type" value="Genomic_DNA"/>
</dbReference>
<dbReference type="RefSeq" id="WP_010811453.1">
    <property type="nucleotide sequence ID" value="NZ_CP039287.1"/>
</dbReference>
<dbReference type="SMR" id="Q0KFI3"/>
<dbReference type="STRING" id="381666.H16_A0086"/>
<dbReference type="KEGG" id="reh:H16_A0086"/>
<dbReference type="eggNOG" id="COG0850">
    <property type="taxonomic scope" value="Bacteria"/>
</dbReference>
<dbReference type="HOGENOM" id="CLU_067812_0_0_4"/>
<dbReference type="OrthoDB" id="9794530at2"/>
<dbReference type="Proteomes" id="UP000008210">
    <property type="component" value="Chromosome 1"/>
</dbReference>
<dbReference type="GO" id="GO:0000902">
    <property type="term" value="P:cell morphogenesis"/>
    <property type="evidence" value="ECO:0007669"/>
    <property type="project" value="InterPro"/>
</dbReference>
<dbReference type="GO" id="GO:0000917">
    <property type="term" value="P:division septum assembly"/>
    <property type="evidence" value="ECO:0007669"/>
    <property type="project" value="UniProtKB-KW"/>
</dbReference>
<dbReference type="GO" id="GO:0051302">
    <property type="term" value="P:regulation of cell division"/>
    <property type="evidence" value="ECO:0007669"/>
    <property type="project" value="InterPro"/>
</dbReference>
<dbReference type="GO" id="GO:1901891">
    <property type="term" value="P:regulation of cell septum assembly"/>
    <property type="evidence" value="ECO:0007669"/>
    <property type="project" value="InterPro"/>
</dbReference>
<dbReference type="Gene3D" id="2.160.20.70">
    <property type="match status" value="1"/>
</dbReference>
<dbReference type="Gene3D" id="3.30.70.260">
    <property type="match status" value="1"/>
</dbReference>
<dbReference type="HAMAP" id="MF_00267">
    <property type="entry name" value="MinC"/>
    <property type="match status" value="1"/>
</dbReference>
<dbReference type="InterPro" id="IPR016098">
    <property type="entry name" value="CAP/MinC_C"/>
</dbReference>
<dbReference type="InterPro" id="IPR013033">
    <property type="entry name" value="MinC"/>
</dbReference>
<dbReference type="InterPro" id="IPR036145">
    <property type="entry name" value="MinC_C_sf"/>
</dbReference>
<dbReference type="InterPro" id="IPR007874">
    <property type="entry name" value="MinC_N"/>
</dbReference>
<dbReference type="InterPro" id="IPR005526">
    <property type="entry name" value="Septum_form_inhib_MinC_C"/>
</dbReference>
<dbReference type="NCBIfam" id="TIGR01222">
    <property type="entry name" value="minC"/>
    <property type="match status" value="1"/>
</dbReference>
<dbReference type="PANTHER" id="PTHR34108">
    <property type="entry name" value="SEPTUM SITE-DETERMINING PROTEIN MINC"/>
    <property type="match status" value="1"/>
</dbReference>
<dbReference type="PANTHER" id="PTHR34108:SF1">
    <property type="entry name" value="SEPTUM SITE-DETERMINING PROTEIN MINC"/>
    <property type="match status" value="1"/>
</dbReference>
<dbReference type="Pfam" id="PF03775">
    <property type="entry name" value="MinC_C"/>
    <property type="match status" value="1"/>
</dbReference>
<dbReference type="Pfam" id="PF05209">
    <property type="entry name" value="MinC_N"/>
    <property type="match status" value="1"/>
</dbReference>
<dbReference type="SUPFAM" id="SSF63848">
    <property type="entry name" value="Cell-division inhibitor MinC, C-terminal domain"/>
    <property type="match status" value="1"/>
</dbReference>
<sequence>MSQKKSPRFELRSGNVDALLLALQTADMAALRDDLLARFEATPDFFSNDVIALDLRALEDDSEVALGTVIETLATLRARAIGVVARPGQREWAERFGLPLLDSQARRGSGADRATDRAAEARAAAAAEQAAADQAAREESIRAAAQATTDAAVAAAIRQTQTMLIDKPLRSGQQVYAQGDVVILDVVSYGAEVIAEGNIHIYAPLRGRALAGVKGNTGARIFSTCMEPELISIAGIYRTAEQTLPADVLGKTAQVRLADEKLILEALRLK</sequence>
<comment type="function">
    <text evidence="1">Cell division inhibitor that blocks the formation of polar Z ring septums. Rapidly oscillates between the poles of the cell to destabilize FtsZ filaments that have formed before they mature into polar Z rings. Prevents FtsZ polymerization.</text>
</comment>
<comment type="subunit">
    <text evidence="1">Interacts with MinD and FtsZ.</text>
</comment>
<comment type="similarity">
    <text evidence="1">Belongs to the MinC family.</text>
</comment>
<gene>
    <name evidence="1" type="primary">minC</name>
    <name type="ordered locus">H16_A0086</name>
</gene>
<keyword id="KW-0131">Cell cycle</keyword>
<keyword id="KW-0132">Cell division</keyword>
<keyword id="KW-1185">Reference proteome</keyword>
<keyword id="KW-0717">Septation</keyword>